<dbReference type="EC" id="3.5.3.-" evidence="3 4"/>
<dbReference type="EMBL" id="BA000022">
    <property type="protein sequence ID" value="BAA17298.1"/>
    <property type="molecule type" value="Genomic_DNA"/>
</dbReference>
<dbReference type="PIR" id="S77451">
    <property type="entry name" value="S77451"/>
</dbReference>
<dbReference type="PDB" id="7ESR">
    <property type="method" value="X-ray"/>
    <property type="resolution" value="1.42 A"/>
    <property type="chains" value="A=1-390"/>
</dbReference>
<dbReference type="PDB" id="7OI1">
    <property type="method" value="X-ray"/>
    <property type="resolution" value="1.90 A"/>
    <property type="chains" value="A/B/C=1-390"/>
</dbReference>
<dbReference type="PDBsum" id="7ESR"/>
<dbReference type="PDBsum" id="7OI1"/>
<dbReference type="SMR" id="P73270"/>
<dbReference type="FunCoup" id="P73270">
    <property type="interactions" value="12"/>
</dbReference>
<dbReference type="IntAct" id="P73270">
    <property type="interactions" value="1"/>
</dbReference>
<dbReference type="STRING" id="1148.gene:10498161"/>
<dbReference type="PaxDb" id="1148-1652376"/>
<dbReference type="EnsemblBacteria" id="BAA17298">
    <property type="protein sequence ID" value="BAA17298"/>
    <property type="gene ID" value="BAA17298"/>
</dbReference>
<dbReference type="KEGG" id="syn:sll1077"/>
<dbReference type="eggNOG" id="COG0010">
    <property type="taxonomic scope" value="Bacteria"/>
</dbReference>
<dbReference type="InParanoid" id="P73270"/>
<dbReference type="PhylomeDB" id="P73270"/>
<dbReference type="Proteomes" id="UP000001425">
    <property type="component" value="Chromosome"/>
</dbReference>
<dbReference type="GO" id="GO:0005737">
    <property type="term" value="C:cytoplasm"/>
    <property type="evidence" value="ECO:0007669"/>
    <property type="project" value="UniProtKB-SubCell"/>
</dbReference>
<dbReference type="GO" id="GO:0008783">
    <property type="term" value="F:agmatinase activity"/>
    <property type="evidence" value="ECO:0000318"/>
    <property type="project" value="GO_Central"/>
</dbReference>
<dbReference type="GO" id="GO:0046872">
    <property type="term" value="F:metal ion binding"/>
    <property type="evidence" value="ECO:0007669"/>
    <property type="project" value="UniProtKB-KW"/>
</dbReference>
<dbReference type="GO" id="GO:0033389">
    <property type="term" value="P:putrescine biosynthetic process from arginine, via agmatine"/>
    <property type="evidence" value="ECO:0000318"/>
    <property type="project" value="GO_Central"/>
</dbReference>
<dbReference type="CDD" id="cd09990">
    <property type="entry name" value="Agmatinase-like"/>
    <property type="match status" value="1"/>
</dbReference>
<dbReference type="FunFam" id="3.40.800.10:FF:000013">
    <property type="entry name" value="Agmatinase, putative"/>
    <property type="match status" value="1"/>
</dbReference>
<dbReference type="Gene3D" id="3.40.800.10">
    <property type="entry name" value="Ureohydrolase domain"/>
    <property type="match status" value="1"/>
</dbReference>
<dbReference type="InterPro" id="IPR005925">
    <property type="entry name" value="Agmatinase-rel"/>
</dbReference>
<dbReference type="InterPro" id="IPR006035">
    <property type="entry name" value="Ureohydrolase"/>
</dbReference>
<dbReference type="InterPro" id="IPR023696">
    <property type="entry name" value="Ureohydrolase_dom_sf"/>
</dbReference>
<dbReference type="InterPro" id="IPR020855">
    <property type="entry name" value="Ureohydrolase_Mn_BS"/>
</dbReference>
<dbReference type="NCBIfam" id="TIGR01230">
    <property type="entry name" value="agmatinase"/>
    <property type="match status" value="1"/>
</dbReference>
<dbReference type="PANTHER" id="PTHR11358">
    <property type="entry name" value="ARGINASE/AGMATINASE"/>
    <property type="match status" value="1"/>
</dbReference>
<dbReference type="PANTHER" id="PTHR11358:SF26">
    <property type="entry name" value="GUANIDINO ACID HYDROLASE, MITOCHONDRIAL"/>
    <property type="match status" value="1"/>
</dbReference>
<dbReference type="Pfam" id="PF00491">
    <property type="entry name" value="Arginase"/>
    <property type="match status" value="1"/>
</dbReference>
<dbReference type="PRINTS" id="PR00116">
    <property type="entry name" value="ARGINASE"/>
</dbReference>
<dbReference type="SUPFAM" id="SSF52768">
    <property type="entry name" value="Arginase/deacetylase"/>
    <property type="match status" value="1"/>
</dbReference>
<dbReference type="PROSITE" id="PS01053">
    <property type="entry name" value="ARGINASE_1"/>
    <property type="match status" value="1"/>
</dbReference>
<dbReference type="PROSITE" id="PS51409">
    <property type="entry name" value="ARGINASE_2"/>
    <property type="match status" value="1"/>
</dbReference>
<keyword id="KW-0002">3D-structure</keyword>
<keyword id="KW-0963">Cytoplasm</keyword>
<keyword id="KW-0378">Hydrolase</keyword>
<keyword id="KW-0479">Metal-binding</keyword>
<keyword id="KW-0533">Nickel</keyword>
<keyword id="KW-1185">Reference proteome</keyword>
<feature type="chain" id="PRO_0000173745" description="Guanidine hydrolase">
    <location>
        <begin position="1"/>
        <end position="390"/>
    </location>
</feature>
<feature type="binding site" evidence="4 11">
    <location>
        <position position="174"/>
    </location>
    <ligand>
        <name>Ni(2+)</name>
        <dbReference type="ChEBI" id="CHEBI:49786"/>
        <label>1</label>
    </ligand>
</feature>
<feature type="binding site" evidence="4 11">
    <location>
        <position position="199"/>
    </location>
    <ligand>
        <name>Ni(2+)</name>
        <dbReference type="ChEBI" id="CHEBI:49786"/>
        <label>1</label>
    </ligand>
</feature>
<feature type="binding site" evidence="4 11">
    <location>
        <position position="199"/>
    </location>
    <ligand>
        <name>Ni(2+)</name>
        <dbReference type="ChEBI" id="CHEBI:49786"/>
        <label>2</label>
    </ligand>
</feature>
<feature type="binding site" evidence="4 11">
    <location>
        <position position="201"/>
    </location>
    <ligand>
        <name>Ni(2+)</name>
        <dbReference type="ChEBI" id="CHEBI:49786"/>
        <label>2</label>
    </ligand>
</feature>
<feature type="binding site" evidence="4 11">
    <location>
        <position position="203"/>
    </location>
    <ligand>
        <name>Ni(2+)</name>
        <dbReference type="ChEBI" id="CHEBI:49786"/>
        <label>1</label>
    </ligand>
</feature>
<feature type="binding site" evidence="4 11">
    <location>
        <position position="291"/>
    </location>
    <ligand>
        <name>Ni(2+)</name>
        <dbReference type="ChEBI" id="CHEBI:49786"/>
        <label>1</label>
    </ligand>
</feature>
<feature type="binding site" evidence="4 11">
    <location>
        <position position="291"/>
    </location>
    <ligand>
        <name>Ni(2+)</name>
        <dbReference type="ChEBI" id="CHEBI:49786"/>
        <label>2</label>
    </ligand>
</feature>
<feature type="binding site" evidence="4 11">
    <location>
        <position position="293"/>
    </location>
    <ligand>
        <name>Ni(2+)</name>
        <dbReference type="ChEBI" id="CHEBI:49786"/>
        <label>2</label>
    </ligand>
</feature>
<feature type="mutagenesis site" description="Strongly reduces the specific activity and the KM for guanidine." evidence="4">
    <original>H</original>
    <variation>A</variation>
    <location>
        <position position="61"/>
    </location>
</feature>
<feature type="mutagenesis site" description="Loss of activity." evidence="4">
    <original>T</original>
    <variation>A</variation>
    <location>
        <position position="97"/>
    </location>
</feature>
<feature type="mutagenesis site" description="Loss of activity." evidence="4">
    <original>W</original>
    <variation>A</variation>
    <location>
        <position position="305"/>
    </location>
</feature>
<feature type="helix" evidence="12">
    <location>
        <begin position="12"/>
        <end position="21"/>
    </location>
</feature>
<feature type="helix" evidence="12">
    <location>
        <begin position="26"/>
        <end position="39"/>
    </location>
</feature>
<feature type="strand" evidence="12">
    <location>
        <begin position="52"/>
        <end position="54"/>
    </location>
</feature>
<feature type="helix" evidence="12">
    <location>
        <begin position="68"/>
        <end position="70"/>
    </location>
</feature>
<feature type="helix" evidence="12">
    <location>
        <begin position="77"/>
        <end position="82"/>
    </location>
</feature>
<feature type="strand" evidence="12">
    <location>
        <begin position="83"/>
        <end position="90"/>
    </location>
</feature>
<feature type="helix" evidence="12">
    <location>
        <begin position="102"/>
        <end position="104"/>
    </location>
</feature>
<feature type="helix" evidence="12">
    <location>
        <begin position="105"/>
        <end position="113"/>
    </location>
</feature>
<feature type="strand" evidence="12">
    <location>
        <begin position="118"/>
        <end position="120"/>
    </location>
</feature>
<feature type="turn" evidence="12">
    <location>
        <begin position="121"/>
        <end position="124"/>
    </location>
</feature>
<feature type="helix" evidence="12">
    <location>
        <begin position="127"/>
        <end position="130"/>
    </location>
</feature>
<feature type="strand" evidence="12">
    <location>
        <begin position="133"/>
        <end position="138"/>
    </location>
</feature>
<feature type="helix" evidence="12">
    <location>
        <begin position="146"/>
        <end position="162"/>
    </location>
</feature>
<feature type="strand" evidence="12">
    <location>
        <begin position="166"/>
        <end position="172"/>
    </location>
</feature>
<feature type="helix" evidence="12">
    <location>
        <begin position="174"/>
        <end position="176"/>
    </location>
</feature>
<feature type="helix" evidence="12">
    <location>
        <begin position="177"/>
        <end position="185"/>
    </location>
</feature>
<feature type="strand" evidence="12">
    <location>
        <begin position="193"/>
        <end position="198"/>
    </location>
</feature>
<feature type="helix" evidence="12">
    <location>
        <begin position="217"/>
        <end position="221"/>
    </location>
</feature>
<feature type="helix" evidence="12">
    <location>
        <begin position="229"/>
        <end position="231"/>
    </location>
</feature>
<feature type="strand" evidence="12">
    <location>
        <begin position="233"/>
        <end position="236"/>
    </location>
</feature>
<feature type="helix" evidence="12">
    <location>
        <begin position="244"/>
        <end position="253"/>
    </location>
</feature>
<feature type="strand" evidence="12">
    <location>
        <begin position="256"/>
        <end position="258"/>
    </location>
</feature>
<feature type="helix" evidence="12">
    <location>
        <begin position="260"/>
        <end position="266"/>
    </location>
</feature>
<feature type="helix" evidence="12">
    <location>
        <begin position="268"/>
        <end position="280"/>
    </location>
</feature>
<feature type="strand" evidence="12">
    <location>
        <begin position="284"/>
        <end position="291"/>
    </location>
</feature>
<feature type="helix" evidence="12">
    <location>
        <begin position="292"/>
        <end position="294"/>
    </location>
</feature>
<feature type="helix" evidence="12">
    <location>
        <begin position="297"/>
        <end position="299"/>
    </location>
</feature>
<feature type="strand" evidence="12">
    <location>
        <begin position="302"/>
        <end position="305"/>
    </location>
</feature>
<feature type="helix" evidence="12">
    <location>
        <begin position="313"/>
        <end position="325"/>
    </location>
</feature>
<feature type="strand" evidence="12">
    <location>
        <begin position="329"/>
        <end position="335"/>
    </location>
</feature>
<feature type="helix" evidence="12">
    <location>
        <begin position="339"/>
        <end position="341"/>
    </location>
</feature>
<feature type="helix" evidence="12">
    <location>
        <begin position="346"/>
        <end position="364"/>
    </location>
</feature>
<accession>P73270</accession>
<gene>
    <name evidence="7" type="primary">gdmH</name>
    <name evidence="5" type="synonym">speB2</name>
    <name evidence="9" type="ordered locus">sll1077</name>
</gene>
<name>GDMH_SYNY3</name>
<sequence length="390" mass="42964">MSDATPFRPPSEAEEALIKETRLPLTGWQQEVDQGLTYGLEAAASIKDRSIPTFSRGELPHYAGINTFMKAPYLEDVREVGKYDVAIVGVPHDSGTTYRPGTRFGPQGIRRISALYTPYNFEMGVDLREQISLCDVGDIFTIPANNEKSFDQISKGIAHIFSSGAFPIILGGDHSIGFPTVRGICRHLGDKKVGIIHFDRHVDTQETDLDERMHTCPWFHATNMANAPAKNLVQLGIGGWQVPRQGVKVCRERATNILTVTDITEMSLDAAADFAIARATDGTDCVWISFDIDCIDAGFVPGTGWPEPGGLLPREALYLLKRIIRETNVCGMEVVEVSPPYDISDMTSLMATRVICDTMAHLVVSGQLPRTEKPAYIHAEANMAVDEPWQ</sequence>
<comment type="function">
    <text evidence="3 4">Catalyzes the hydrolysis of guanidine into urea and ammonium (PubMed:34446715, PubMed:35264792). Is highly specific for free guanidine (PubMed:35264792). At pH 8, also catalyzes the release of urea from methylguanidine but with significantly reduced specific activity compared with that for guanidine (PubMed:35264792). Cannot hydrolyze guanidinoacetate, guanidinopropionate, guanidinobutyrate, agmatine, arginine or creatine (PubMed:34446715, PubMed:35264792). Required to use guanidine as the sole nitrogen source for growth (PubMed:35264792). Overexpression of the gene accelerates guanidine degradation and promotes biomass growth (PubMed:34446715).</text>
</comment>
<comment type="catalytic activity">
    <reaction evidence="3 4">
        <text>guanidine + H2O = urea + NH4(+)</text>
        <dbReference type="Rhea" id="RHEA:79567"/>
        <dbReference type="ChEBI" id="CHEBI:15377"/>
        <dbReference type="ChEBI" id="CHEBI:16199"/>
        <dbReference type="ChEBI" id="CHEBI:28938"/>
        <dbReference type="ChEBI" id="CHEBI:30087"/>
    </reaction>
    <physiologicalReaction direction="left-to-right" evidence="3 4">
        <dbReference type="Rhea" id="RHEA:79568"/>
    </physiologicalReaction>
</comment>
<comment type="cofactor">
    <cofactor evidence="4">
        <name>Ni(2+)</name>
        <dbReference type="ChEBI" id="CHEBI:49786"/>
    </cofactor>
    <text evidence="4">Binds 2 nickel ions per subunit.</text>
</comment>
<comment type="activity regulation">
    <text evidence="3 4">Activation of GdmH depends on the presence of the accessory proteins GhaA (Sll1078) and GhaB (Sll1079), which load nickel into the active site (PubMed:35264792). Hydrolase activity is slightly activated in the presence of GTP (PubMed:35264792). It does not require ATP or NAD(P)H (PubMed:34446715). Addition of Ca(2+), Mn(2+), Fe(2+) or Fe(3+) has no consistent effects, whereas addition of Co(2+), Cu(2+) or Zn(2+) inhibits the activity (PubMed:35264792).</text>
</comment>
<comment type="biophysicochemical properties">
    <kinetics>
        <KM evidence="3">5.3 mM for guanidine (His-tagged enzyme)</KM>
        <KM evidence="4">7.81 mM for guanidine (at pH 8)</KM>
        <KM evidence="4">1.11 mM for guanidine (at pH 10)</KM>
        <KM evidence="4">149.1 mM for methylguanidine (at pH 8)</KM>
        <Vmax evidence="3">0.055 umol/min/mg enzyme with guanidine as substrate (His-tagged enzyme)</Vmax>
        <text evidence="3 4">kcat is 0.040 sec(-1) with guanidine as substrate (His-tagged enzyme) (PubMed:34446715). kcat is 3.83 sec(-1) with guanidine as substrate (at pH 8) (PubMed:35264792). kcat is 7.95 sec(-1) with guanidine as substrate (at pH 10) (PubMed:35264792). kcat is 1.8 sec(-1) with methylguanidine as substrate (at pH 8) (PubMed:35264792).</text>
    </kinetics>
    <phDependence>
        <text evidence="4">Optimum pH is 9.5-10.</text>
    </phDependence>
    <temperatureDependence>
        <text evidence="4">Optimum temperature is 55-65 degrees Celsius (PubMed:35264792). Is highly resistant to thermal inactivation (PubMed:35264792).</text>
    </temperatureDependence>
</comment>
<comment type="subunit">
    <text evidence="4">Homohexamer.</text>
</comment>
<comment type="subcellular location">
    <subcellularLocation>
        <location evidence="8">Cytoplasm</location>
    </subcellularLocation>
</comment>
<comment type="disruption phenotype">
    <text evidence="2 3">Knockout of the gene does not have any apparent physiological effects on the cells under normal growth conditions or under nitrate-deprived conditions (PubMed:34446715). Nevertheless, under nitrate-deprived guanidine-supplemented culture conditions, the cell growth of the mutant is severely inhibited compared to the wild-type strain (PubMed:34446715). The guanidine-degradation capability is abolished (PubMed:34446715). Mutant exhibits arginase activity, as determined in cell extracts, identical to that found in the wild-type strain (PubMed:10648527). The mutant shows about 69% of the agmatinase activity found in the wild type (PubMed:10648527).</text>
</comment>
<comment type="similarity">
    <text evidence="1">Belongs to the arginase family.</text>
</comment>
<evidence type="ECO:0000255" key="1">
    <source>
        <dbReference type="PROSITE-ProRule" id="PRU00742"/>
    </source>
</evidence>
<evidence type="ECO:0000269" key="2">
    <source>
    </source>
</evidence>
<evidence type="ECO:0000269" key="3">
    <source>
    </source>
</evidence>
<evidence type="ECO:0000269" key="4">
    <source>
    </source>
</evidence>
<evidence type="ECO:0000303" key="5">
    <source>
    </source>
</evidence>
<evidence type="ECO:0000303" key="6">
    <source>
    </source>
</evidence>
<evidence type="ECO:0000303" key="7">
    <source>
    </source>
</evidence>
<evidence type="ECO:0000305" key="8">
    <source>
    </source>
</evidence>
<evidence type="ECO:0000312" key="9">
    <source>
        <dbReference type="EMBL" id="BAA17298.1"/>
    </source>
</evidence>
<evidence type="ECO:0007744" key="10">
    <source>
        <dbReference type="PDB" id="7ESR"/>
    </source>
</evidence>
<evidence type="ECO:0007744" key="11">
    <source>
        <dbReference type="PDB" id="7OI1"/>
    </source>
</evidence>
<evidence type="ECO:0007829" key="12">
    <source>
        <dbReference type="PDB" id="7ESR"/>
    </source>
</evidence>
<organism>
    <name type="scientific">Synechocystis sp. (strain ATCC 27184 / PCC 6803 / Kazusa)</name>
    <dbReference type="NCBI Taxonomy" id="1111708"/>
    <lineage>
        <taxon>Bacteria</taxon>
        <taxon>Bacillati</taxon>
        <taxon>Cyanobacteriota</taxon>
        <taxon>Cyanophyceae</taxon>
        <taxon>Synechococcales</taxon>
        <taxon>Merismopediaceae</taxon>
        <taxon>Synechocystis</taxon>
    </lineage>
</organism>
<reference key="1">
    <citation type="journal article" date="1996" name="DNA Res.">
        <title>Sequence analysis of the genome of the unicellular cyanobacterium Synechocystis sp. strain PCC6803. II. Sequence determination of the entire genome and assignment of potential protein-coding regions.</title>
        <authorList>
            <person name="Kaneko T."/>
            <person name="Sato S."/>
            <person name="Kotani H."/>
            <person name="Tanaka A."/>
            <person name="Asamizu E."/>
            <person name="Nakamura Y."/>
            <person name="Miyajima N."/>
            <person name="Hirosawa M."/>
            <person name="Sugiura M."/>
            <person name="Sasamoto S."/>
            <person name="Kimura T."/>
            <person name="Hosouchi T."/>
            <person name="Matsuno A."/>
            <person name="Muraki A."/>
            <person name="Nakazaki N."/>
            <person name="Naruo K."/>
            <person name="Okumura S."/>
            <person name="Shimpo S."/>
            <person name="Takeuchi C."/>
            <person name="Wada T."/>
            <person name="Watanabe A."/>
            <person name="Yamada M."/>
            <person name="Yasuda M."/>
            <person name="Tabata S."/>
        </authorList>
    </citation>
    <scope>NUCLEOTIDE SEQUENCE [LARGE SCALE GENOMIC DNA]</scope>
    <source>
        <strain>ATCC 27184 / PCC 6803 / Kazusa</strain>
    </source>
</reference>
<reference key="2">
    <citation type="journal article" date="2000" name="J. Bacteriol.">
        <title>Arginine catabolism in the cyanobacterium Synechocystis sp. strain PCC 6803 involves the urea cycle and arginase pathway.</title>
        <authorList>
            <person name="Quintero M.J."/>
            <person name="Muro-Pastor A.M."/>
            <person name="Herrero A."/>
            <person name="Flores E."/>
        </authorList>
    </citation>
    <scope>DISRUPTION PHENOTYPE</scope>
    <source>
        <strain>ATCC 27184 / PCC 6803 / Kazusa</strain>
    </source>
</reference>
<reference key="3">
    <citation type="journal article" date="2021" name="Nat. Commun.">
        <title>A guanidine-degrading enzyme controls genomic stability of ethylene-producing cyanobacteria.</title>
        <authorList>
            <person name="Wang B."/>
            <person name="Xu Y."/>
            <person name="Wang X."/>
            <person name="Yuan J.S."/>
            <person name="Johnson C.H."/>
            <person name="Young J.D."/>
            <person name="Yu J."/>
        </authorList>
    </citation>
    <scope>FUNCTION</scope>
    <scope>CATALYTIC ACTIVITY</scope>
    <scope>ACTIVITY REGULATION</scope>
    <scope>BIOPHYSICOCHEMICAL PROPERTIES</scope>
    <scope>DISRUPTION PHENOTYPE</scope>
    <source>
        <strain>ATCC 27184 / PCC 6803 / Kazusa</strain>
    </source>
</reference>
<reference evidence="10 11" key="4">
    <citation type="journal article" date="2022" name="Nature">
        <title>Discovery of a Ni2+-dependent guanidine hydrolase in bacteria.</title>
        <authorList>
            <person name="Funck D."/>
            <person name="Sinn M."/>
            <person name="Fleming J.R."/>
            <person name="Stanoppi M."/>
            <person name="Dietrich J."/>
            <person name="Lopez-Igual R."/>
            <person name="Mayans O."/>
            <person name="Hartig J.S."/>
        </authorList>
    </citation>
    <scope>X-RAY CRYSTALLOGRAPHY (1.42 ANGSTROMS) IN COMPLEX WITH NICKEL IONS</scope>
    <scope>FUNCTION</scope>
    <scope>CATALYTIC ACTIVITY</scope>
    <scope>COFACTOR</scope>
    <scope>ACTIVITY REGULATION</scope>
    <scope>BIOPHYSICOCHEMICAL PROPERTIES</scope>
    <scope>SUBUNIT</scope>
    <scope>MUTAGENESIS OF HIS-61; THR-97 AND TRP-305</scope>
    <source>
        <strain>ATCC 27184 / PCC 6803 / Kazusa</strain>
    </source>
</reference>
<proteinExistence type="evidence at protein level"/>
<protein>
    <recommendedName>
        <fullName evidence="7">Guanidine hydrolase</fullName>
        <ecNumber evidence="3 4">3.5.3.-</ecNumber>
    </recommendedName>
    <alternativeName>
        <fullName evidence="6">Guanidinase</fullName>
    </alternativeName>
    <alternativeName>
        <fullName evidence="7">Guanidinium hydrolase</fullName>
    </alternativeName>
    <alternativeName>
        <fullName evidence="7">Ni(2+)-dependent guanidine hydrolase</fullName>
    </alternativeName>
</protein>